<accession>Q10PI9</accession>
<accession>Q0DTQ5</accession>
<accession>Q8S5X3</accession>
<reference key="1">
    <citation type="journal article" date="2005" name="Genome Res.">
        <title>Sequence, annotation, and analysis of synteny between rice chromosome 3 and diverged grass species.</title>
        <authorList>
            <consortium name="The rice chromosome 3 sequencing consortium"/>
            <person name="Buell C.R."/>
            <person name="Yuan Q."/>
            <person name="Ouyang S."/>
            <person name="Liu J."/>
            <person name="Zhu W."/>
            <person name="Wang A."/>
            <person name="Maiti R."/>
            <person name="Haas B."/>
            <person name="Wortman J."/>
            <person name="Pertea M."/>
            <person name="Jones K.M."/>
            <person name="Kim M."/>
            <person name="Overton L."/>
            <person name="Tsitrin T."/>
            <person name="Fadrosh D."/>
            <person name="Bera J."/>
            <person name="Weaver B."/>
            <person name="Jin S."/>
            <person name="Johri S."/>
            <person name="Reardon M."/>
            <person name="Webb K."/>
            <person name="Hill J."/>
            <person name="Moffat K."/>
            <person name="Tallon L."/>
            <person name="Van Aken S."/>
            <person name="Lewis M."/>
            <person name="Utterback T."/>
            <person name="Feldblyum T."/>
            <person name="Zismann V."/>
            <person name="Iobst S."/>
            <person name="Hsiao J."/>
            <person name="de Vazeille A.R."/>
            <person name="Salzberg S.L."/>
            <person name="White O."/>
            <person name="Fraser C.M."/>
            <person name="Yu Y."/>
            <person name="Kim H."/>
            <person name="Rambo T."/>
            <person name="Currie J."/>
            <person name="Collura K."/>
            <person name="Kernodle-Thompson S."/>
            <person name="Wei F."/>
            <person name="Kudrna K."/>
            <person name="Ammiraju J.S.S."/>
            <person name="Luo M."/>
            <person name="Goicoechea J.L."/>
            <person name="Wing R.A."/>
            <person name="Henry D."/>
            <person name="Oates R."/>
            <person name="Palmer M."/>
            <person name="Pries G."/>
            <person name="Saski C."/>
            <person name="Simmons J."/>
            <person name="Soderlund C."/>
            <person name="Nelson W."/>
            <person name="de la Bastide M."/>
            <person name="Spiegel L."/>
            <person name="Nascimento L."/>
            <person name="Huang E."/>
            <person name="Preston R."/>
            <person name="Zutavern T."/>
            <person name="Palmer L."/>
            <person name="O'Shaughnessy A."/>
            <person name="Dike S."/>
            <person name="McCombie W.R."/>
            <person name="Minx P."/>
            <person name="Cordum H."/>
            <person name="Wilson R."/>
            <person name="Jin W."/>
            <person name="Lee H.R."/>
            <person name="Jiang J."/>
            <person name="Jackson S."/>
        </authorList>
    </citation>
    <scope>NUCLEOTIDE SEQUENCE [LARGE SCALE GENOMIC DNA]</scope>
    <source>
        <strain>cv. Nipponbare</strain>
    </source>
</reference>
<reference key="2">
    <citation type="journal article" date="2005" name="Nature">
        <title>The map-based sequence of the rice genome.</title>
        <authorList>
            <consortium name="International rice genome sequencing project (IRGSP)"/>
        </authorList>
    </citation>
    <scope>NUCLEOTIDE SEQUENCE [LARGE SCALE GENOMIC DNA]</scope>
    <source>
        <strain>cv. Nipponbare</strain>
    </source>
</reference>
<reference key="3">
    <citation type="journal article" date="2008" name="Nucleic Acids Res.">
        <title>The rice annotation project database (RAP-DB): 2008 update.</title>
        <authorList>
            <consortium name="The rice annotation project (RAP)"/>
        </authorList>
    </citation>
    <scope>GENOME REANNOTATION</scope>
    <source>
        <strain>cv. Nipponbare</strain>
    </source>
</reference>
<reference key="4">
    <citation type="journal article" date="2013" name="Rice">
        <title>Improvement of the Oryza sativa Nipponbare reference genome using next generation sequence and optical map data.</title>
        <authorList>
            <person name="Kawahara Y."/>
            <person name="de la Bastide M."/>
            <person name="Hamilton J.P."/>
            <person name="Kanamori H."/>
            <person name="McCombie W.R."/>
            <person name="Ouyang S."/>
            <person name="Schwartz D.C."/>
            <person name="Tanaka T."/>
            <person name="Wu J."/>
            <person name="Zhou S."/>
            <person name="Childs K.L."/>
            <person name="Davidson R.M."/>
            <person name="Lin H."/>
            <person name="Quesada-Ocampo L."/>
            <person name="Vaillancourt B."/>
            <person name="Sakai H."/>
            <person name="Lee S.S."/>
            <person name="Kim J."/>
            <person name="Numa H."/>
            <person name="Itoh T."/>
            <person name="Buell C.R."/>
            <person name="Matsumoto T."/>
        </authorList>
    </citation>
    <scope>GENOME REANNOTATION</scope>
    <source>
        <strain>cv. Nipponbare</strain>
    </source>
</reference>
<reference key="5">
    <citation type="journal article" date="2003" name="Science">
        <title>Collection, mapping, and annotation of over 28,000 cDNA clones from japonica rice.</title>
        <authorList>
            <consortium name="The rice full-length cDNA consortium"/>
        </authorList>
    </citation>
    <scope>NUCLEOTIDE SEQUENCE [LARGE SCALE MRNA]</scope>
    <source>
        <strain>cv. Nipponbare</strain>
    </source>
</reference>
<reference key="6">
    <citation type="journal article" date="2008" name="Mol. Plant">
        <title>Classification, expression pattern, and E3 ligase activity assay of rice U-box-containing proteins.</title>
        <authorList>
            <person name="Zeng L.R."/>
            <person name="Park C.H."/>
            <person name="Venu R.C."/>
            <person name="Gough J."/>
            <person name="Wang G.L."/>
        </authorList>
    </citation>
    <scope>GENE FAMILY</scope>
    <scope>NOMENCLATURE</scope>
</reference>
<reference key="7">
    <citation type="journal article" date="2013" name="Plant Signal. Behav.">
        <title>An E3 ubiquitin ligase, ERECT LEAF1, functions in brassinosteroid signaling of rice.</title>
        <authorList>
            <person name="Sakamoto T."/>
            <person name="Kitano H."/>
            <person name="Fujioka S."/>
        </authorList>
    </citation>
    <scope>FUNCTION</scope>
    <scope>TISSUE SPECIFICITY</scope>
    <scope>INDUCTION</scope>
    <scope>DISRUPTION PHENOTYPE</scope>
</reference>
<reference key="8">
    <citation type="journal article" date="2013" name="PLoS Genet.">
        <title>The U-box E3 ubiquitin ligase TUD1 functions with a heterotrimeric G alpha subunit to regulate Brassinosteroid-mediated growth in rice.</title>
        <authorList>
            <person name="Hu X."/>
            <person name="Qian Q."/>
            <person name="Xu T."/>
            <person name="Zhang Y."/>
            <person name="Dong G."/>
            <person name="Gao T."/>
            <person name="Xie Q."/>
            <person name="Xue Y."/>
        </authorList>
    </citation>
    <scope>FUNCTION</scope>
    <scope>INTERACTION WITH GPA1</scope>
    <scope>SUBCELLULAR LOCATION</scope>
    <scope>DISRUPTION PHENOTYPE</scope>
</reference>
<protein>
    <recommendedName>
        <fullName evidence="8">U-box domain-containing protein 75</fullName>
        <shortName evidence="5">OsPUB75</shortName>
        <ecNumber evidence="8">2.3.2.27</ecNumber>
    </recommendedName>
    <alternativeName>
        <fullName evidence="7">Protein ERECT LEAF 1</fullName>
    </alternativeName>
    <alternativeName>
        <fullName evidence="6">Protein TAIHU DWARF1</fullName>
    </alternativeName>
    <alternativeName>
        <fullName evidence="8">RING-type E3 ubiquitin transferase PUB75</fullName>
    </alternativeName>
</protein>
<name>PUB75_ORYSJ</name>
<organism>
    <name type="scientific">Oryza sativa subsp. japonica</name>
    <name type="common">Rice</name>
    <dbReference type="NCBI Taxonomy" id="39947"/>
    <lineage>
        <taxon>Eukaryota</taxon>
        <taxon>Viridiplantae</taxon>
        <taxon>Streptophyta</taxon>
        <taxon>Embryophyta</taxon>
        <taxon>Tracheophyta</taxon>
        <taxon>Spermatophyta</taxon>
        <taxon>Magnoliopsida</taxon>
        <taxon>Liliopsida</taxon>
        <taxon>Poales</taxon>
        <taxon>Poaceae</taxon>
        <taxon>BOP clade</taxon>
        <taxon>Oryzoideae</taxon>
        <taxon>Oryzeae</taxon>
        <taxon>Oryzinae</taxon>
        <taxon>Oryza</taxon>
        <taxon>Oryza sativa</taxon>
    </lineage>
</organism>
<dbReference type="EC" id="2.3.2.27" evidence="8"/>
<dbReference type="EMBL" id="AC103891">
    <property type="protein sequence ID" value="AAM19135.1"/>
    <property type="status" value="ALT_SEQ"/>
    <property type="molecule type" value="Genomic_DNA"/>
</dbReference>
<dbReference type="EMBL" id="DP000009">
    <property type="protein sequence ID" value="ABF94807.1"/>
    <property type="molecule type" value="Genomic_DNA"/>
</dbReference>
<dbReference type="EMBL" id="AP008209">
    <property type="protein sequence ID" value="BAF11383.2"/>
    <property type="molecule type" value="Genomic_DNA"/>
</dbReference>
<dbReference type="EMBL" id="AP014959">
    <property type="protein sequence ID" value="BAS83120.1"/>
    <property type="molecule type" value="Genomic_DNA"/>
</dbReference>
<dbReference type="EMBL" id="AK068218">
    <property type="protein sequence ID" value="BAG90807.1"/>
    <property type="molecule type" value="mRNA"/>
</dbReference>
<dbReference type="RefSeq" id="XP_015632077.1">
    <property type="nucleotide sequence ID" value="XM_015776591.1"/>
</dbReference>
<dbReference type="SMR" id="Q10PI9"/>
<dbReference type="FunCoup" id="Q10PI9">
    <property type="interactions" value="300"/>
</dbReference>
<dbReference type="STRING" id="39947.Q10PI9"/>
<dbReference type="PaxDb" id="39947-Q10PI9"/>
<dbReference type="EnsemblPlants" id="Os03t0232600-01">
    <property type="protein sequence ID" value="Os03t0232600-01"/>
    <property type="gene ID" value="Os03g0232600"/>
</dbReference>
<dbReference type="Gramene" id="Os03t0232600-01">
    <property type="protein sequence ID" value="Os03t0232600-01"/>
    <property type="gene ID" value="Os03g0232600"/>
</dbReference>
<dbReference type="KEGG" id="dosa:Os03g0232600"/>
<dbReference type="eggNOG" id="ENOG502QTEJ">
    <property type="taxonomic scope" value="Eukaryota"/>
</dbReference>
<dbReference type="HOGENOM" id="CLU_006348_1_2_1"/>
<dbReference type="InParanoid" id="Q10PI9"/>
<dbReference type="OMA" id="RSNIHKW"/>
<dbReference type="OrthoDB" id="10064100at2759"/>
<dbReference type="UniPathway" id="UPA00143"/>
<dbReference type="Proteomes" id="UP000000763">
    <property type="component" value="Chromosome 3"/>
</dbReference>
<dbReference type="Proteomes" id="UP000059680">
    <property type="component" value="Chromosome 3"/>
</dbReference>
<dbReference type="GO" id="GO:0005886">
    <property type="term" value="C:plasma membrane"/>
    <property type="evidence" value="ECO:0000314"/>
    <property type="project" value="UniProtKB"/>
</dbReference>
<dbReference type="GO" id="GO:0061630">
    <property type="term" value="F:ubiquitin protein ligase activity"/>
    <property type="evidence" value="ECO:0000314"/>
    <property type="project" value="UniProtKB"/>
</dbReference>
<dbReference type="GO" id="GO:0009742">
    <property type="term" value="P:brassinosteroid mediated signaling pathway"/>
    <property type="evidence" value="ECO:0007669"/>
    <property type="project" value="UniProtKB-KW"/>
</dbReference>
<dbReference type="GO" id="GO:0016567">
    <property type="term" value="P:protein ubiquitination"/>
    <property type="evidence" value="ECO:0000314"/>
    <property type="project" value="UniProtKB"/>
</dbReference>
<dbReference type="GO" id="GO:1900457">
    <property type="term" value="P:regulation of brassinosteroid mediated signaling pathway"/>
    <property type="evidence" value="ECO:0000315"/>
    <property type="project" value="UniProtKB"/>
</dbReference>
<dbReference type="CDD" id="cd16664">
    <property type="entry name" value="RING-Ubox_PUB"/>
    <property type="match status" value="1"/>
</dbReference>
<dbReference type="FunFam" id="1.25.10.10:FF:000753">
    <property type="entry name" value="RING-type E3 ubiquitin transferase"/>
    <property type="match status" value="1"/>
</dbReference>
<dbReference type="FunFam" id="3.30.40.10:FF:000736">
    <property type="entry name" value="RING-type E3 ubiquitin transferase"/>
    <property type="match status" value="1"/>
</dbReference>
<dbReference type="Gene3D" id="1.25.10.10">
    <property type="entry name" value="Leucine-rich Repeat Variant"/>
    <property type="match status" value="2"/>
</dbReference>
<dbReference type="Gene3D" id="3.30.40.10">
    <property type="entry name" value="Zinc/RING finger domain, C3HC4 (zinc finger)"/>
    <property type="match status" value="1"/>
</dbReference>
<dbReference type="InterPro" id="IPR011989">
    <property type="entry name" value="ARM-like"/>
</dbReference>
<dbReference type="InterPro" id="IPR016024">
    <property type="entry name" value="ARM-type_fold"/>
</dbReference>
<dbReference type="InterPro" id="IPR045185">
    <property type="entry name" value="PUB22/23/24-like"/>
</dbReference>
<dbReference type="InterPro" id="IPR045210">
    <property type="entry name" value="RING-Ubox_PUB"/>
</dbReference>
<dbReference type="InterPro" id="IPR003613">
    <property type="entry name" value="Ubox_domain"/>
</dbReference>
<dbReference type="InterPro" id="IPR013083">
    <property type="entry name" value="Znf_RING/FYVE/PHD"/>
</dbReference>
<dbReference type="PANTHER" id="PTHR22849:SF142">
    <property type="entry name" value="U-BOX DOMAIN-CONTAINING PROTEIN 31"/>
    <property type="match status" value="1"/>
</dbReference>
<dbReference type="PANTHER" id="PTHR22849">
    <property type="entry name" value="WDSAM1 PROTEIN"/>
    <property type="match status" value="1"/>
</dbReference>
<dbReference type="Pfam" id="PF04564">
    <property type="entry name" value="U-box"/>
    <property type="match status" value="1"/>
</dbReference>
<dbReference type="SMART" id="SM00504">
    <property type="entry name" value="Ubox"/>
    <property type="match status" value="1"/>
</dbReference>
<dbReference type="SUPFAM" id="SSF48371">
    <property type="entry name" value="ARM repeat"/>
    <property type="match status" value="2"/>
</dbReference>
<dbReference type="SUPFAM" id="SSF57850">
    <property type="entry name" value="RING/U-box"/>
    <property type="match status" value="1"/>
</dbReference>
<dbReference type="PROSITE" id="PS51698">
    <property type="entry name" value="U_BOX"/>
    <property type="match status" value="1"/>
</dbReference>
<comment type="function">
    <text evidence="3 4">E3 ubiquitin ligase that may function as positive regulator of brassinosteroid (BR) signaling. Possesses E3 ubiquitin ligase in vitro (PubMed:23526892, PubMed:24299927). Acts together with the heterotrimeric G alpha subunit GPA1 at the plasma membrane to mediate a BR signaling pathway that affects plant growth and development. Does not seem to be involved in gibberellin or cytokinin responses (PubMed:23526892).</text>
</comment>
<comment type="catalytic activity">
    <reaction evidence="8">
        <text>S-ubiquitinyl-[E2 ubiquitin-conjugating enzyme]-L-cysteine + [acceptor protein]-L-lysine = [E2 ubiquitin-conjugating enzyme]-L-cysteine + N(6)-ubiquitinyl-[acceptor protein]-L-lysine.</text>
        <dbReference type="EC" id="2.3.2.27"/>
    </reaction>
</comment>
<comment type="pathway">
    <text evidence="8">Protein modification; protein ubiquitination.</text>
</comment>
<comment type="subunit">
    <text evidence="3">Interacts with GPA1.</text>
</comment>
<comment type="subcellular location">
    <subcellularLocation>
        <location evidence="3">Cell membrane</location>
        <topology evidence="9">Peripheral membrane protein</topology>
    </subcellularLocation>
</comment>
<comment type="tissue specificity">
    <text evidence="4">Expressed highly in panicles at flowering time, at moderate levels in vegetative shoot apices, leaf sheaths, leaf blades, and elongating internodes, and at low levels in roots.</text>
</comment>
<comment type="induction">
    <text evidence="4">Slightly down-regulated by brassinolide.</text>
</comment>
<comment type="disruption phenotype">
    <text evidence="3 4">Dwarf phenotype with erect leaves and short grains (PubMed:23526892, PubMed:24299927). Dwarf phenotype is mainly due to decreased cell proliferation and disorganized cell files in aerial organs (PubMed:23526892).</text>
</comment>
<comment type="sequence caution" evidence="8">
    <conflict type="erroneous gene model prediction">
        <sequence resource="EMBL-CDS" id="AAM19135"/>
    </conflict>
</comment>
<sequence length="459" mass="48858">MPQYQELPCGGQVLDIDTALKDGILGGGPELGDAAAGDGGKQPVELRKMMDELDAAGDGGGDEAVPAVFICPISLEPMVDPVTLCTGQTYESANISRWLALGHRTCPTTMQELWDVTPIPNTTLRQLIAAWFSRRYTRFKKRSADFHGRAAELVHALRGTAVPKRQPLKGQARVAALRELRSLAAAHQSVTKAIAEAGGVGLLTSLLGPFTSHAVGSEAVAILVSGVPLDADAKAALMQPAKVSLLVDMLNEGAVDTKINCVRLIRILMEEKGFRPDTVASLSLLVGVMRLVRDKRHPDGVAAGLELLNSICAVHKPARSLIVSIGAVPQLVELLPELPTECVEPALDILDALAAVPEGRIALKDCPRTITNAVRLLMRVSEACTRRALSMLWVVCRMAPEECAPAALDAGLGAKLLLVIQSGCGPELKQQASELLKLCTMNCTSTVFISKCKLTKTIQ</sequence>
<feature type="chain" id="PRO_0000439018" description="U-box domain-containing protein 75">
    <location>
        <begin position="1"/>
        <end position="459"/>
    </location>
</feature>
<feature type="domain" description="U-box" evidence="2">
    <location>
        <begin position="64"/>
        <end position="138"/>
    </location>
</feature>
<feature type="repeat" description="ARM 1" evidence="1">
    <location>
        <begin position="188"/>
        <end position="229"/>
    </location>
</feature>
<feature type="repeat" description="ARM 2" evidence="1">
    <location>
        <begin position="231"/>
        <end position="270"/>
    </location>
</feature>
<proteinExistence type="evidence at protein level"/>
<gene>
    <name evidence="6" type="primary">TUD1</name>
    <name evidence="7" type="synonym">ELF1</name>
    <name evidence="5" type="synonym">PUB75</name>
    <name evidence="12" type="ordered locus">Os03g0232600</name>
    <name evidence="11" type="ordered locus">LOC_Os03g13010</name>
    <name evidence="10" type="ORF">OJ1175C11.15</name>
</gene>
<evidence type="ECO:0000255" key="1"/>
<evidence type="ECO:0000255" key="2">
    <source>
        <dbReference type="PROSITE-ProRule" id="PRU01034"/>
    </source>
</evidence>
<evidence type="ECO:0000269" key="3">
    <source>
    </source>
</evidence>
<evidence type="ECO:0000269" key="4">
    <source>
    </source>
</evidence>
<evidence type="ECO:0000303" key="5">
    <source>
    </source>
</evidence>
<evidence type="ECO:0000303" key="6">
    <source>
    </source>
</evidence>
<evidence type="ECO:0000303" key="7">
    <source>
    </source>
</evidence>
<evidence type="ECO:0000305" key="8"/>
<evidence type="ECO:0000305" key="9">
    <source>
    </source>
</evidence>
<evidence type="ECO:0000312" key="10">
    <source>
        <dbReference type="EMBL" id="AAM19135.1"/>
    </source>
</evidence>
<evidence type="ECO:0000312" key="11">
    <source>
        <dbReference type="EMBL" id="ABF94807.1"/>
    </source>
</evidence>
<evidence type="ECO:0000312" key="12">
    <source>
        <dbReference type="EMBL" id="BAF11383.2"/>
    </source>
</evidence>
<keyword id="KW-1070">Brassinosteroid signaling pathway</keyword>
<keyword id="KW-1003">Cell membrane</keyword>
<keyword id="KW-0472">Membrane</keyword>
<keyword id="KW-1185">Reference proteome</keyword>
<keyword id="KW-0677">Repeat</keyword>
<keyword id="KW-0808">Transferase</keyword>
<keyword id="KW-0833">Ubl conjugation pathway</keyword>